<dbReference type="EC" id="5.1.1.3" evidence="1"/>
<dbReference type="EMBL" id="AF058689">
    <property type="protein sequence ID" value="AAF06679.1"/>
    <property type="molecule type" value="Genomic_DNA"/>
</dbReference>
<dbReference type="EMBL" id="AL157959">
    <property type="protein sequence ID" value="CAM09131.1"/>
    <property type="molecule type" value="Genomic_DNA"/>
</dbReference>
<dbReference type="PIR" id="C81196">
    <property type="entry name" value="C81196"/>
</dbReference>
<dbReference type="RefSeq" id="WP_002223465.1">
    <property type="nucleotide sequence ID" value="NC_003116.1"/>
</dbReference>
<dbReference type="SMR" id="P0A0Q9"/>
<dbReference type="EnsemblBacteria" id="CAM09131">
    <property type="protein sequence ID" value="CAM09131"/>
    <property type="gene ID" value="NMA2026"/>
</dbReference>
<dbReference type="GeneID" id="93387553"/>
<dbReference type="KEGG" id="nma:NMA2026"/>
<dbReference type="HOGENOM" id="CLU_052344_0_2_4"/>
<dbReference type="UniPathway" id="UPA00219"/>
<dbReference type="Proteomes" id="UP000000626">
    <property type="component" value="Chromosome"/>
</dbReference>
<dbReference type="GO" id="GO:0008881">
    <property type="term" value="F:glutamate racemase activity"/>
    <property type="evidence" value="ECO:0007669"/>
    <property type="project" value="UniProtKB-UniRule"/>
</dbReference>
<dbReference type="GO" id="GO:0071555">
    <property type="term" value="P:cell wall organization"/>
    <property type="evidence" value="ECO:0007669"/>
    <property type="project" value="UniProtKB-KW"/>
</dbReference>
<dbReference type="GO" id="GO:0009252">
    <property type="term" value="P:peptidoglycan biosynthetic process"/>
    <property type="evidence" value="ECO:0007669"/>
    <property type="project" value="UniProtKB-UniRule"/>
</dbReference>
<dbReference type="GO" id="GO:0008360">
    <property type="term" value="P:regulation of cell shape"/>
    <property type="evidence" value="ECO:0007669"/>
    <property type="project" value="UniProtKB-KW"/>
</dbReference>
<dbReference type="FunFam" id="3.40.50.1860:FF:000002">
    <property type="entry name" value="Glutamate racemase"/>
    <property type="match status" value="1"/>
</dbReference>
<dbReference type="Gene3D" id="3.40.50.1860">
    <property type="match status" value="2"/>
</dbReference>
<dbReference type="HAMAP" id="MF_00258">
    <property type="entry name" value="Glu_racemase"/>
    <property type="match status" value="1"/>
</dbReference>
<dbReference type="InterPro" id="IPR015942">
    <property type="entry name" value="Asp/Glu/hydantoin_racemase"/>
</dbReference>
<dbReference type="InterPro" id="IPR001920">
    <property type="entry name" value="Asp/Glu_race"/>
</dbReference>
<dbReference type="InterPro" id="IPR033134">
    <property type="entry name" value="Asp/Glu_racemase_AS_2"/>
</dbReference>
<dbReference type="InterPro" id="IPR004391">
    <property type="entry name" value="Glu_race"/>
</dbReference>
<dbReference type="NCBIfam" id="TIGR00067">
    <property type="entry name" value="glut_race"/>
    <property type="match status" value="1"/>
</dbReference>
<dbReference type="PANTHER" id="PTHR21198">
    <property type="entry name" value="GLUTAMATE RACEMASE"/>
    <property type="match status" value="1"/>
</dbReference>
<dbReference type="PANTHER" id="PTHR21198:SF2">
    <property type="entry name" value="GLUTAMATE RACEMASE"/>
    <property type="match status" value="1"/>
</dbReference>
<dbReference type="Pfam" id="PF01177">
    <property type="entry name" value="Asp_Glu_race"/>
    <property type="match status" value="1"/>
</dbReference>
<dbReference type="SUPFAM" id="SSF53681">
    <property type="entry name" value="Aspartate/glutamate racemase"/>
    <property type="match status" value="2"/>
</dbReference>
<dbReference type="PROSITE" id="PS00924">
    <property type="entry name" value="ASP_GLU_RACEMASE_2"/>
    <property type="match status" value="1"/>
</dbReference>
<proteinExistence type="inferred from homology"/>
<sequence length="270" mass="29535">MENIGRQRPIGVFDSGIGGLTNVRALMERLPMENIIYFGDTARVPYGTKSKATIENFSMQIVDFLLEHDVKAMVIACNTIAAVAGQKIRQKTGNMPVLDVISAGAKAALATTRNNKIGIIATNTTVNSNAYARAIHRNNPDTLVRTQAAPLLVPLVEEGWLEHEVTRLTVCEYLKPLLADGIDTLVLGCTHFPLLKPLIGREAGNVALVDSAITTAEETARVLAQEGLLNTDNNNPDYRFYVSDIPLKFRTIGERFLGRTMEQIEMVSLG</sequence>
<reference key="1">
    <citation type="submission" date="1999-11" db="EMBL/GenBank/DDBJ databases">
        <authorList>
            <person name="Schenker M."/>
            <person name="Morelli G."/>
            <person name="Achtman M."/>
        </authorList>
    </citation>
    <scope>NUCLEOTIDE SEQUENCE [GENOMIC DNA]</scope>
    <source>
        <strain>DSM 15465 / Z2491</strain>
    </source>
</reference>
<reference key="2">
    <citation type="journal article" date="2000" name="Nature">
        <title>Complete DNA sequence of a serogroup A strain of Neisseria meningitidis Z2491.</title>
        <authorList>
            <person name="Parkhill J."/>
            <person name="Achtman M."/>
            <person name="James K.D."/>
            <person name="Bentley S.D."/>
            <person name="Churcher C.M."/>
            <person name="Klee S.R."/>
            <person name="Morelli G."/>
            <person name="Basham D."/>
            <person name="Brown D."/>
            <person name="Chillingworth T."/>
            <person name="Davies R.M."/>
            <person name="Davis P."/>
            <person name="Devlin K."/>
            <person name="Feltwell T."/>
            <person name="Hamlin N."/>
            <person name="Holroyd S."/>
            <person name="Jagels K."/>
            <person name="Leather S."/>
            <person name="Moule S."/>
            <person name="Mungall K.L."/>
            <person name="Quail M.A."/>
            <person name="Rajandream M.A."/>
            <person name="Rutherford K.M."/>
            <person name="Simmonds M."/>
            <person name="Skelton J."/>
            <person name="Whitehead S."/>
            <person name="Spratt B.G."/>
            <person name="Barrell B.G."/>
        </authorList>
    </citation>
    <scope>NUCLEOTIDE SEQUENCE [LARGE SCALE GENOMIC DNA]</scope>
    <source>
        <strain>DSM 15465 / Z2491</strain>
    </source>
</reference>
<evidence type="ECO:0000255" key="1">
    <source>
        <dbReference type="HAMAP-Rule" id="MF_00258"/>
    </source>
</evidence>
<protein>
    <recommendedName>
        <fullName evidence="1">Glutamate racemase</fullName>
        <ecNumber evidence="1">5.1.1.3</ecNumber>
    </recommendedName>
</protein>
<gene>
    <name evidence="1" type="primary">murI</name>
    <name type="synonym">glr</name>
    <name type="ordered locus">NMA2026</name>
</gene>
<organism>
    <name type="scientific">Neisseria meningitidis serogroup A / serotype 4A (strain DSM 15465 / Z2491)</name>
    <dbReference type="NCBI Taxonomy" id="122587"/>
    <lineage>
        <taxon>Bacteria</taxon>
        <taxon>Pseudomonadati</taxon>
        <taxon>Pseudomonadota</taxon>
        <taxon>Betaproteobacteria</taxon>
        <taxon>Neisseriales</taxon>
        <taxon>Neisseriaceae</taxon>
        <taxon>Neisseria</taxon>
    </lineage>
</organism>
<keyword id="KW-0133">Cell shape</keyword>
<keyword id="KW-0961">Cell wall biogenesis/degradation</keyword>
<keyword id="KW-0413">Isomerase</keyword>
<keyword id="KW-0573">Peptidoglycan synthesis</keyword>
<name>MURI_NEIMA</name>
<accession>P0A0Q9</accession>
<accession>A1ITL4</accession>
<accession>Q9RQW7</accession>
<comment type="function">
    <text evidence="1">Provides the (R)-glutamate required for cell wall biosynthesis.</text>
</comment>
<comment type="catalytic activity">
    <reaction evidence="1">
        <text>L-glutamate = D-glutamate</text>
        <dbReference type="Rhea" id="RHEA:12813"/>
        <dbReference type="ChEBI" id="CHEBI:29985"/>
        <dbReference type="ChEBI" id="CHEBI:29986"/>
        <dbReference type="EC" id="5.1.1.3"/>
    </reaction>
</comment>
<comment type="pathway">
    <text evidence="1">Cell wall biogenesis; peptidoglycan biosynthesis.</text>
</comment>
<comment type="similarity">
    <text evidence="1">Belongs to the aspartate/glutamate racemases family.</text>
</comment>
<feature type="chain" id="PRO_0000095491" description="Glutamate racemase">
    <location>
        <begin position="1"/>
        <end position="270"/>
    </location>
</feature>
<feature type="active site" description="Proton donor/acceptor" evidence="1">
    <location>
        <position position="77"/>
    </location>
</feature>
<feature type="active site" description="Proton donor/acceptor" evidence="1">
    <location>
        <position position="189"/>
    </location>
</feature>
<feature type="binding site" evidence="1">
    <location>
        <begin position="14"/>
        <end position="15"/>
    </location>
    <ligand>
        <name>substrate</name>
    </ligand>
</feature>
<feature type="binding site" evidence="1">
    <location>
        <begin position="46"/>
        <end position="47"/>
    </location>
    <ligand>
        <name>substrate</name>
    </ligand>
</feature>
<feature type="binding site" evidence="1">
    <location>
        <begin position="78"/>
        <end position="79"/>
    </location>
    <ligand>
        <name>substrate</name>
    </ligand>
</feature>
<feature type="binding site" evidence="1">
    <location>
        <begin position="190"/>
        <end position="191"/>
    </location>
    <ligand>
        <name>substrate</name>
    </ligand>
</feature>